<keyword id="KW-0067">ATP-binding</keyword>
<keyword id="KW-0414">Isoprene biosynthesis</keyword>
<keyword id="KW-0418">Kinase</keyword>
<keyword id="KW-0547">Nucleotide-binding</keyword>
<keyword id="KW-1185">Reference proteome</keyword>
<keyword id="KW-0808">Transferase</keyword>
<accession>A8F7B1</accession>
<name>ISPE_PSELT</name>
<evidence type="ECO:0000255" key="1">
    <source>
        <dbReference type="HAMAP-Rule" id="MF_00061"/>
    </source>
</evidence>
<gene>
    <name evidence="1" type="primary">ispE</name>
    <name type="ordered locus">Tlet_1489</name>
</gene>
<feature type="chain" id="PRO_0000335768" description="4-diphosphocytidyl-2-C-methyl-D-erythritol kinase">
    <location>
        <begin position="1"/>
        <end position="275"/>
    </location>
</feature>
<feature type="active site" evidence="1">
    <location>
        <position position="15"/>
    </location>
</feature>
<feature type="active site" evidence="1">
    <location>
        <position position="137"/>
    </location>
</feature>
<feature type="binding site" evidence="1">
    <location>
        <begin position="97"/>
        <end position="107"/>
    </location>
    <ligand>
        <name>ATP</name>
        <dbReference type="ChEBI" id="CHEBI:30616"/>
    </ligand>
</feature>
<sequence length="275" mass="30983">MVISDYFEIERAYAKLNLYLDVLSKRPDGYHNITGLFQTIDLHDELEISQIDKRGEVRIETNIEIQGTNLIEKAFRTVEKFYNVGFGIKVRLKKNIPMGSGLGGGSSDAAAVLRFLGRKLKISIKDLLILAAEVGSDVPFLIVGGTAIVEGRGEKVTFLNPISDYRVDLFCPTISVSTKFAYQMIHESTYAKKPDFALKLYEAYLKRDHNQIKALSYNVFQEIMTSKYPQIQDALDKAQRCNPIVAMMTGSGSCIFAVQADKGKYRFIEDVFQHL</sequence>
<dbReference type="EC" id="2.7.1.148" evidence="1"/>
<dbReference type="EMBL" id="CP000812">
    <property type="protein sequence ID" value="ABV34045.1"/>
    <property type="molecule type" value="Genomic_DNA"/>
</dbReference>
<dbReference type="RefSeq" id="WP_012003521.1">
    <property type="nucleotide sequence ID" value="NZ_BSDV01000001.1"/>
</dbReference>
<dbReference type="SMR" id="A8F7B1"/>
<dbReference type="STRING" id="416591.Tlet_1489"/>
<dbReference type="KEGG" id="tle:Tlet_1489"/>
<dbReference type="eggNOG" id="COG1947">
    <property type="taxonomic scope" value="Bacteria"/>
</dbReference>
<dbReference type="HOGENOM" id="CLU_053057_2_0_0"/>
<dbReference type="OrthoDB" id="9809438at2"/>
<dbReference type="UniPathway" id="UPA00056">
    <property type="reaction ID" value="UER00094"/>
</dbReference>
<dbReference type="Proteomes" id="UP000002016">
    <property type="component" value="Chromosome"/>
</dbReference>
<dbReference type="GO" id="GO:0050515">
    <property type="term" value="F:4-(cytidine 5'-diphospho)-2-C-methyl-D-erythritol kinase activity"/>
    <property type="evidence" value="ECO:0007669"/>
    <property type="project" value="UniProtKB-UniRule"/>
</dbReference>
<dbReference type="GO" id="GO:0005524">
    <property type="term" value="F:ATP binding"/>
    <property type="evidence" value="ECO:0007669"/>
    <property type="project" value="UniProtKB-UniRule"/>
</dbReference>
<dbReference type="GO" id="GO:0019288">
    <property type="term" value="P:isopentenyl diphosphate biosynthetic process, methylerythritol 4-phosphate pathway"/>
    <property type="evidence" value="ECO:0007669"/>
    <property type="project" value="UniProtKB-UniRule"/>
</dbReference>
<dbReference type="GO" id="GO:0016114">
    <property type="term" value="P:terpenoid biosynthetic process"/>
    <property type="evidence" value="ECO:0007669"/>
    <property type="project" value="InterPro"/>
</dbReference>
<dbReference type="Gene3D" id="3.30.230.10">
    <property type="match status" value="1"/>
</dbReference>
<dbReference type="Gene3D" id="3.30.70.890">
    <property type="entry name" value="GHMP kinase, C-terminal domain"/>
    <property type="match status" value="1"/>
</dbReference>
<dbReference type="HAMAP" id="MF_00061">
    <property type="entry name" value="IspE"/>
    <property type="match status" value="1"/>
</dbReference>
<dbReference type="InterPro" id="IPR013750">
    <property type="entry name" value="GHMP_kinase_C_dom"/>
</dbReference>
<dbReference type="InterPro" id="IPR036554">
    <property type="entry name" value="GHMP_kinase_C_sf"/>
</dbReference>
<dbReference type="InterPro" id="IPR006204">
    <property type="entry name" value="GHMP_kinase_N_dom"/>
</dbReference>
<dbReference type="InterPro" id="IPR004424">
    <property type="entry name" value="IspE"/>
</dbReference>
<dbReference type="InterPro" id="IPR020568">
    <property type="entry name" value="Ribosomal_Su5_D2-typ_SF"/>
</dbReference>
<dbReference type="InterPro" id="IPR014721">
    <property type="entry name" value="Ribsml_uS5_D2-typ_fold_subgr"/>
</dbReference>
<dbReference type="NCBIfam" id="TIGR00154">
    <property type="entry name" value="ispE"/>
    <property type="match status" value="1"/>
</dbReference>
<dbReference type="PANTHER" id="PTHR43527">
    <property type="entry name" value="4-DIPHOSPHOCYTIDYL-2-C-METHYL-D-ERYTHRITOL KINASE, CHLOROPLASTIC"/>
    <property type="match status" value="1"/>
</dbReference>
<dbReference type="PANTHER" id="PTHR43527:SF2">
    <property type="entry name" value="4-DIPHOSPHOCYTIDYL-2-C-METHYL-D-ERYTHRITOL KINASE, CHLOROPLASTIC"/>
    <property type="match status" value="1"/>
</dbReference>
<dbReference type="Pfam" id="PF08544">
    <property type="entry name" value="GHMP_kinases_C"/>
    <property type="match status" value="1"/>
</dbReference>
<dbReference type="Pfam" id="PF00288">
    <property type="entry name" value="GHMP_kinases_N"/>
    <property type="match status" value="1"/>
</dbReference>
<dbReference type="PIRSF" id="PIRSF010376">
    <property type="entry name" value="IspE"/>
    <property type="match status" value="1"/>
</dbReference>
<dbReference type="SUPFAM" id="SSF55060">
    <property type="entry name" value="GHMP Kinase, C-terminal domain"/>
    <property type="match status" value="1"/>
</dbReference>
<dbReference type="SUPFAM" id="SSF54211">
    <property type="entry name" value="Ribosomal protein S5 domain 2-like"/>
    <property type="match status" value="1"/>
</dbReference>
<proteinExistence type="inferred from homology"/>
<protein>
    <recommendedName>
        <fullName evidence="1">4-diphosphocytidyl-2-C-methyl-D-erythritol kinase</fullName>
        <shortName evidence="1">CMK</shortName>
        <ecNumber evidence="1">2.7.1.148</ecNumber>
    </recommendedName>
    <alternativeName>
        <fullName evidence="1">4-(cytidine-5'-diphospho)-2-C-methyl-D-erythritol kinase</fullName>
    </alternativeName>
</protein>
<comment type="function">
    <text evidence="1">Catalyzes the phosphorylation of the position 2 hydroxy group of 4-diphosphocytidyl-2C-methyl-D-erythritol.</text>
</comment>
<comment type="catalytic activity">
    <reaction evidence="1">
        <text>4-CDP-2-C-methyl-D-erythritol + ATP = 4-CDP-2-C-methyl-D-erythritol 2-phosphate + ADP + H(+)</text>
        <dbReference type="Rhea" id="RHEA:18437"/>
        <dbReference type="ChEBI" id="CHEBI:15378"/>
        <dbReference type="ChEBI" id="CHEBI:30616"/>
        <dbReference type="ChEBI" id="CHEBI:57823"/>
        <dbReference type="ChEBI" id="CHEBI:57919"/>
        <dbReference type="ChEBI" id="CHEBI:456216"/>
        <dbReference type="EC" id="2.7.1.148"/>
    </reaction>
</comment>
<comment type="pathway">
    <text evidence="1">Isoprenoid biosynthesis; isopentenyl diphosphate biosynthesis via DXP pathway; isopentenyl diphosphate from 1-deoxy-D-xylulose 5-phosphate: step 3/6.</text>
</comment>
<comment type="similarity">
    <text evidence="1">Belongs to the GHMP kinase family. IspE subfamily.</text>
</comment>
<reference key="1">
    <citation type="submission" date="2007-08" db="EMBL/GenBank/DDBJ databases">
        <title>Complete sequence of Thermotoga lettingae TMO.</title>
        <authorList>
            <consortium name="US DOE Joint Genome Institute"/>
            <person name="Copeland A."/>
            <person name="Lucas S."/>
            <person name="Lapidus A."/>
            <person name="Barry K."/>
            <person name="Glavina del Rio T."/>
            <person name="Dalin E."/>
            <person name="Tice H."/>
            <person name="Pitluck S."/>
            <person name="Foster B."/>
            <person name="Bruce D."/>
            <person name="Schmutz J."/>
            <person name="Larimer F."/>
            <person name="Land M."/>
            <person name="Hauser L."/>
            <person name="Kyrpides N."/>
            <person name="Mikhailova N."/>
            <person name="Nelson K."/>
            <person name="Gogarten J.P."/>
            <person name="Noll K."/>
            <person name="Richardson P."/>
        </authorList>
    </citation>
    <scope>NUCLEOTIDE SEQUENCE [LARGE SCALE GENOMIC DNA]</scope>
    <source>
        <strain>ATCC BAA-301 / DSM 14385 / NBRC 107922 / TMO</strain>
    </source>
</reference>
<organism>
    <name type="scientific">Pseudothermotoga lettingae (strain ATCC BAA-301 / DSM 14385 / NBRC 107922 / TMO)</name>
    <name type="common">Thermotoga lettingae</name>
    <dbReference type="NCBI Taxonomy" id="416591"/>
    <lineage>
        <taxon>Bacteria</taxon>
        <taxon>Thermotogati</taxon>
        <taxon>Thermotogota</taxon>
        <taxon>Thermotogae</taxon>
        <taxon>Thermotogales</taxon>
        <taxon>Thermotogaceae</taxon>
        <taxon>Pseudothermotoga</taxon>
    </lineage>
</organism>